<gene>
    <name type="primary">hisS</name>
    <name type="ordered locus">mlr6928</name>
</gene>
<evidence type="ECO:0000250" key="1"/>
<evidence type="ECO:0000305" key="2"/>
<comment type="catalytic activity">
    <reaction>
        <text>tRNA(His) + L-histidine + ATP = L-histidyl-tRNA(His) + AMP + diphosphate + H(+)</text>
        <dbReference type="Rhea" id="RHEA:17313"/>
        <dbReference type="Rhea" id="RHEA-COMP:9665"/>
        <dbReference type="Rhea" id="RHEA-COMP:9689"/>
        <dbReference type="ChEBI" id="CHEBI:15378"/>
        <dbReference type="ChEBI" id="CHEBI:30616"/>
        <dbReference type="ChEBI" id="CHEBI:33019"/>
        <dbReference type="ChEBI" id="CHEBI:57595"/>
        <dbReference type="ChEBI" id="CHEBI:78442"/>
        <dbReference type="ChEBI" id="CHEBI:78527"/>
        <dbReference type="ChEBI" id="CHEBI:456215"/>
        <dbReference type="EC" id="6.1.1.21"/>
    </reaction>
</comment>
<comment type="subunit">
    <text evidence="1">Homodimer.</text>
</comment>
<comment type="subcellular location">
    <subcellularLocation>
        <location evidence="1">Cytoplasm</location>
    </subcellularLocation>
</comment>
<comment type="similarity">
    <text evidence="2">Belongs to the class-II aminoacyl-tRNA synthetase family.</text>
</comment>
<feature type="chain" id="PRO_0000136234" description="Histidine--tRNA ligase">
    <location>
        <begin position="1"/>
        <end position="500"/>
    </location>
</feature>
<name>SYH_RHILO</name>
<protein>
    <recommendedName>
        <fullName>Histidine--tRNA ligase</fullName>
        <ecNumber>6.1.1.21</ecNumber>
    </recommendedName>
    <alternativeName>
        <fullName>Histidyl-tRNA synthetase</fullName>
        <shortName>HisRS</shortName>
    </alternativeName>
</protein>
<proteinExistence type="inferred from homology"/>
<keyword id="KW-0030">Aminoacyl-tRNA synthetase</keyword>
<keyword id="KW-0067">ATP-binding</keyword>
<keyword id="KW-0963">Cytoplasm</keyword>
<keyword id="KW-0436">Ligase</keyword>
<keyword id="KW-0547">Nucleotide-binding</keyword>
<keyword id="KW-0648">Protein biosynthesis</keyword>
<reference key="1">
    <citation type="journal article" date="2000" name="DNA Res.">
        <title>Complete genome structure of the nitrogen-fixing symbiotic bacterium Mesorhizobium loti.</title>
        <authorList>
            <person name="Kaneko T."/>
            <person name="Nakamura Y."/>
            <person name="Sato S."/>
            <person name="Asamizu E."/>
            <person name="Kato T."/>
            <person name="Sasamoto S."/>
            <person name="Watanabe A."/>
            <person name="Idesawa K."/>
            <person name="Ishikawa A."/>
            <person name="Kawashima K."/>
            <person name="Kimura T."/>
            <person name="Kishida Y."/>
            <person name="Kiyokawa C."/>
            <person name="Kohara M."/>
            <person name="Matsumoto M."/>
            <person name="Matsuno A."/>
            <person name="Mochizuki Y."/>
            <person name="Nakayama S."/>
            <person name="Nakazaki N."/>
            <person name="Shimpo S."/>
            <person name="Sugimoto M."/>
            <person name="Takeuchi C."/>
            <person name="Yamada M."/>
            <person name="Tabata S."/>
        </authorList>
    </citation>
    <scope>NUCLEOTIDE SEQUENCE [LARGE SCALE GENOMIC DNA]</scope>
    <source>
        <strain>LMG 29417 / CECT 9101 / MAFF 303099</strain>
    </source>
</reference>
<accession>Q987T0</accession>
<dbReference type="EC" id="6.1.1.21"/>
<dbReference type="EMBL" id="BA000012">
    <property type="protein sequence ID" value="BAB53120.1"/>
    <property type="molecule type" value="Genomic_DNA"/>
</dbReference>
<dbReference type="RefSeq" id="WP_010914430.1">
    <property type="nucleotide sequence ID" value="NC_002678.2"/>
</dbReference>
<dbReference type="SMR" id="Q987T0"/>
<dbReference type="KEGG" id="mlo:mlr6928"/>
<dbReference type="PATRIC" id="fig|266835.9.peg.5510"/>
<dbReference type="eggNOG" id="COG0124">
    <property type="taxonomic scope" value="Bacteria"/>
</dbReference>
<dbReference type="HOGENOM" id="CLU_025113_3_2_5"/>
<dbReference type="Proteomes" id="UP000000552">
    <property type="component" value="Chromosome"/>
</dbReference>
<dbReference type="GO" id="GO:0005737">
    <property type="term" value="C:cytoplasm"/>
    <property type="evidence" value="ECO:0007669"/>
    <property type="project" value="UniProtKB-SubCell"/>
</dbReference>
<dbReference type="GO" id="GO:0005524">
    <property type="term" value="F:ATP binding"/>
    <property type="evidence" value="ECO:0007669"/>
    <property type="project" value="UniProtKB-UniRule"/>
</dbReference>
<dbReference type="GO" id="GO:0004821">
    <property type="term" value="F:histidine-tRNA ligase activity"/>
    <property type="evidence" value="ECO:0007669"/>
    <property type="project" value="UniProtKB-UniRule"/>
</dbReference>
<dbReference type="GO" id="GO:0006427">
    <property type="term" value="P:histidyl-tRNA aminoacylation"/>
    <property type="evidence" value="ECO:0007669"/>
    <property type="project" value="UniProtKB-UniRule"/>
</dbReference>
<dbReference type="CDD" id="cd00773">
    <property type="entry name" value="HisRS-like_core"/>
    <property type="match status" value="1"/>
</dbReference>
<dbReference type="CDD" id="cd00859">
    <property type="entry name" value="HisRS_anticodon"/>
    <property type="match status" value="1"/>
</dbReference>
<dbReference type="Gene3D" id="3.40.50.800">
    <property type="entry name" value="Anticodon-binding domain"/>
    <property type="match status" value="1"/>
</dbReference>
<dbReference type="Gene3D" id="3.30.930.10">
    <property type="entry name" value="Bira Bifunctional Protein, Domain 2"/>
    <property type="match status" value="1"/>
</dbReference>
<dbReference type="HAMAP" id="MF_00127">
    <property type="entry name" value="His_tRNA_synth"/>
    <property type="match status" value="1"/>
</dbReference>
<dbReference type="InterPro" id="IPR006195">
    <property type="entry name" value="aa-tRNA-synth_II"/>
</dbReference>
<dbReference type="InterPro" id="IPR045864">
    <property type="entry name" value="aa-tRNA-synth_II/BPL/LPL"/>
</dbReference>
<dbReference type="InterPro" id="IPR004154">
    <property type="entry name" value="Anticodon-bd"/>
</dbReference>
<dbReference type="InterPro" id="IPR036621">
    <property type="entry name" value="Anticodon-bd_dom_sf"/>
</dbReference>
<dbReference type="InterPro" id="IPR015807">
    <property type="entry name" value="His-tRNA-ligase"/>
</dbReference>
<dbReference type="InterPro" id="IPR041715">
    <property type="entry name" value="HisRS-like_core"/>
</dbReference>
<dbReference type="InterPro" id="IPR004516">
    <property type="entry name" value="HisRS/HisZ"/>
</dbReference>
<dbReference type="InterPro" id="IPR033656">
    <property type="entry name" value="HisRS_anticodon"/>
</dbReference>
<dbReference type="NCBIfam" id="TIGR00442">
    <property type="entry name" value="hisS"/>
    <property type="match status" value="1"/>
</dbReference>
<dbReference type="PANTHER" id="PTHR11476:SF7">
    <property type="entry name" value="HISTIDINE--TRNA LIGASE"/>
    <property type="match status" value="1"/>
</dbReference>
<dbReference type="PANTHER" id="PTHR11476">
    <property type="entry name" value="HISTIDYL-TRNA SYNTHETASE"/>
    <property type="match status" value="1"/>
</dbReference>
<dbReference type="Pfam" id="PF03129">
    <property type="entry name" value="HGTP_anticodon"/>
    <property type="match status" value="1"/>
</dbReference>
<dbReference type="Pfam" id="PF13393">
    <property type="entry name" value="tRNA-synt_His"/>
    <property type="match status" value="1"/>
</dbReference>
<dbReference type="PIRSF" id="PIRSF001549">
    <property type="entry name" value="His-tRNA_synth"/>
    <property type="match status" value="1"/>
</dbReference>
<dbReference type="SUPFAM" id="SSF52954">
    <property type="entry name" value="Class II aaRS ABD-related"/>
    <property type="match status" value="1"/>
</dbReference>
<dbReference type="SUPFAM" id="SSF55681">
    <property type="entry name" value="Class II aaRS and biotin synthetases"/>
    <property type="match status" value="1"/>
</dbReference>
<dbReference type="PROSITE" id="PS50862">
    <property type="entry name" value="AA_TRNA_LIGASE_II"/>
    <property type="match status" value="1"/>
</dbReference>
<organism>
    <name type="scientific">Mesorhizobium japonicum (strain LMG 29417 / CECT 9101 / MAFF 303099)</name>
    <name type="common">Mesorhizobium loti (strain MAFF 303099)</name>
    <dbReference type="NCBI Taxonomy" id="266835"/>
    <lineage>
        <taxon>Bacteria</taxon>
        <taxon>Pseudomonadati</taxon>
        <taxon>Pseudomonadota</taxon>
        <taxon>Alphaproteobacteria</taxon>
        <taxon>Hyphomicrobiales</taxon>
        <taxon>Phyllobacteriaceae</taxon>
        <taxon>Mesorhizobium</taxon>
    </lineage>
</organism>
<sequence>MADKSEKTKARLPRGFADRSAEDIRAVEKMMATIRSVYELYGFEPADQPLIEYTDALGKFLPDQDRPNEGVFSFQDDDEQWLSLRYDLTAPTARFVAENYERLPKPYRSYRSGWVFRNEKPGPGRFRQFMQFDADTIGTPGVAADAEMAMMMADVMEALGIKRGDYVIRVNNRKVLDGVLEAIGLGGEENIGRRLTVLRAIDKLDKLGPEGVKLLLGPGRWDGGKEGEGDFAKGAGLNNGQAEAVLQATARNAQAAQDSVVDSNATYQEGVGELATIEALVRAAGYGEDRIAMDRSVVRGLEYYTGPVFEAELLAEIPNEDGQIVRFGSVGGGGRYDGLVSRFRGEPVPATGFSIGVSRLMTALKNLGKLDNADVIAPVVVLVMDKDTESLGRYQKMVSELRAAGIRSEMYLGGAGMKAQLKYADRRGCPVAIIQGGDERAKGELQIKDLIEGARMSAEITDNAEWRAARPAQVTVAESELVAEVKKILAAQAEERARGK</sequence>